<reference key="1">
    <citation type="journal article" date="1985" name="Proc. Natl. Acad. Sci. U.S.A.">
        <title>Molecular cloning and amino acid sequence of the precursor form of bovine adrenodoxin: evidence for a previously unidentified COOH-terminal peptide.</title>
        <authorList>
            <person name="Okamura T."/>
            <person name="John M.E."/>
            <person name="Zuber M.X."/>
            <person name="Simpson E.R."/>
            <person name="Waterman M.R."/>
        </authorList>
    </citation>
    <scope>NUCLEOTIDE SEQUENCE [MRNA] (ISOFORM 1)</scope>
</reference>
<reference key="2">
    <citation type="journal article" date="1987" name="J. Biol. Chem.">
        <title>Multiple species of bovine adrenodoxin mRNA. Occurrence of two different mitochondrial precursor sequences associated with the same mature sequence.</title>
        <authorList>
            <person name="Okamura T."/>
            <person name="Kagimoto M."/>
            <person name="Simpson E.R."/>
            <person name="Waterman M.R."/>
        </authorList>
    </citation>
    <scope>NUCLEOTIDE SEQUENCE [MRNA] (ISOFORM 2)</scope>
</reference>
<reference key="3">
    <citation type="journal article" date="1990" name="J. Biochem.">
        <title>Structural organization of the bovine adrenodoxin gene.</title>
        <authorList>
            <person name="Sagara Y."/>
            <person name="Sawae H."/>
            <person name="Kimura A."/>
            <person name="Sagara-Nakano Y."/>
            <person name="Morohashi K."/>
            <person name="Miyoshi K."/>
            <person name="Horiuchi T."/>
        </authorList>
    </citation>
    <scope>NUCLEOTIDE SEQUENCE [GENOMIC DNA / MRNA]</scope>
</reference>
<reference key="4">
    <citation type="journal article" date="1992" name="Int. J. Biochem.">
        <title>Molecular cloning and nucleotide sequences of bovine hepato-ferredoxin cDNA; identical primary structures of hepato- and adreno-ferredoxins.</title>
        <authorList>
            <person name="Matsuo Y."/>
            <person name="Tomita S."/>
            <person name="Tsuneoka Y."/>
            <person name="Furukawa A."/>
            <person name="Ichikawa Y."/>
        </authorList>
    </citation>
    <scope>NUCLEOTIDE SEQUENCE [MRNA] (ISOFORM 1)</scope>
    <source>
        <tissue>Liver</tissue>
    </source>
</reference>
<reference key="5">
    <citation type="journal article" date="2005" name="BMC Genomics">
        <title>Characterization of 954 bovine full-CDS cDNA sequences.</title>
        <authorList>
            <person name="Harhay G.P."/>
            <person name="Sonstegard T.S."/>
            <person name="Keele J.W."/>
            <person name="Heaton M.P."/>
            <person name="Clawson M.L."/>
            <person name="Snelling W.M."/>
            <person name="Wiedmann R.T."/>
            <person name="Van Tassell C.P."/>
            <person name="Smith T.P.L."/>
        </authorList>
    </citation>
    <scope>NUCLEOTIDE SEQUENCE [LARGE SCALE MRNA] (ISOFORM 1)</scope>
</reference>
<reference key="6">
    <citation type="submission" date="2005-11" db="EMBL/GenBank/DDBJ databases">
        <authorList>
            <consortium name="NIH - Mammalian Gene Collection (MGC) project"/>
        </authorList>
    </citation>
    <scope>NUCLEOTIDE SEQUENCE [LARGE SCALE MRNA] (ISOFORM 1)</scope>
    <source>
        <strain>Crossbred X Angus</strain>
        <tissue>Liver</tissue>
    </source>
</reference>
<reference key="7">
    <citation type="journal article" date="1988" name="J. Biol. Chem.">
        <title>Transcription of the bovine adrenodoxin gene produces two species of mRNA of which only one is translated into adrenodoxin.</title>
        <authorList>
            <person name="Kagimoto M."/>
            <person name="Kagimoto K."/>
            <person name="Simpson E.R."/>
            <person name="Waterman M.R."/>
        </authorList>
    </citation>
    <scope>NUCLEOTIDE SEQUENCE [GENOMIC DNA] OF 1-102</scope>
</reference>
<reference key="8">
    <citation type="journal article" date="1973" name="J. Biol. Chem.">
        <title>The amino acid sequence of bovine adrenodoxin.</title>
        <authorList>
            <person name="Tanaka M."/>
            <person name="Haniu M."/>
            <person name="Yasunobu K.T."/>
            <person name="Kimura T."/>
        </authorList>
    </citation>
    <scope>PROTEIN SEQUENCE OF 59-172 (ISOFORM 1)</scope>
</reference>
<reference key="9">
    <citation type="journal article" date="1988" name="Arch. Biochem. Biophys.">
        <title>Isolation and purification of mature bovine adrenocortical ferredoxin with an elongated carboxyl end.</title>
        <authorList>
            <person name="Sakihama N."/>
            <person name="Hiwatashi A."/>
            <person name="Miyatake A."/>
            <person name="Shin M."/>
            <person name="Ichikawa Y."/>
        </authorList>
    </citation>
    <scope>PROTEIN SEQUENCE OF 171-185</scope>
</reference>
<reference key="10">
    <citation type="journal article" date="1980" name="J. Biol. Chem.">
        <title>Mitochondrial cytochrome P-450scc. Mechanism of electron transport by adrenodoxin.</title>
        <authorList>
            <person name="Hanukoglu I."/>
            <person name="Jefcoate C.R."/>
        </authorList>
    </citation>
    <scope>FUNCTION</scope>
</reference>
<reference key="11">
    <citation type="journal article" date="1986" name="Eur. J. Biochem.">
        <title>Stoichiometry of mitochondrial cytochromes P-450, adrenodoxin and adrenodoxin reductase in adrenal cortex and corpus luteum. Implications for membrane organization and gene regulation.</title>
        <authorList>
            <person name="Hanukoglu I."/>
            <person name="Hanukoglu Z."/>
        </authorList>
    </citation>
    <scope>TISSUE SPECIFICITY</scope>
</reference>
<reference key="12">
    <citation type="journal article" date="2001" name="J. Biol. Chem.">
        <title>Adrenodoxin reductase-adrenodoxin complex structure suggests electron transfer path in steroid biosynthesis.</title>
        <authorList>
            <person name="Mueller J.J."/>
            <person name="Lapko A."/>
            <person name="Bourenkov G."/>
            <person name="Ruckpaul K."/>
            <person name="Heinemann U."/>
        </authorList>
    </citation>
    <scope>X-RAY CRYSTALLOGRAPHY (2.3 ANGSTROMS) OF 59-186 IN COMPLEX WITH ADRENODOXIN REDUCTASE</scope>
</reference>
<reference key="13">
    <citation type="journal article" date="1991" name="Biochemistry">
        <title>1H NMR spectra of vertebrate [2Fe-2S] ferredoxins. Hyperfine resonances suggest different electron delocalization patterns from plant ferredoxins.</title>
        <authorList>
            <person name="Skjeldal L."/>
            <person name="Markley J.L."/>
            <person name="Coghlan V.M."/>
            <person name="Vickery L.E."/>
        </authorList>
    </citation>
    <scope>STRUCTURE BY NMR OF 59-186</scope>
</reference>
<reference key="14">
    <citation type="journal article" date="2002" name="Biochemistry">
        <title>A new electron transport mechanism in mitochondrial steroid hydroxylase systems based on structural changes upon the reduction of adrenodoxin.</title>
        <authorList>
            <person name="Beilke D."/>
            <person name="Weiss R."/>
            <person name="Loehr F."/>
            <person name="Pristovsek P."/>
            <person name="Hannemann F."/>
            <person name="Bernhardt R."/>
            <person name="Rueterjans H."/>
        </authorList>
    </citation>
    <scope>STRUCTURE BY NMR OF 59-186</scope>
</reference>
<reference key="15">
    <citation type="journal article" date="1998" name="Structure">
        <title>New aspects of electron transfer revealed by the crystal structure of a truncated bovine adrenodoxin, Adx(4-108).</title>
        <authorList>
            <person name="Mueller A."/>
            <person name="Mueller J.J."/>
            <person name="Muller Y.A."/>
            <person name="Uhlmann H."/>
            <person name="Bernhardt R."/>
            <person name="Heinemann U."/>
        </authorList>
    </citation>
    <scope>X-RAY CRYSTALLOGRAPHY (1.85 ANGSTROMS) OF 63-166</scope>
</reference>
<reference key="16">
    <citation type="journal article" date="2000" name="Arch. Biochem. Biophys.">
        <title>The tertiary structure of full-length bovine adrenodoxin suggests functional dimers.</title>
        <authorList>
            <person name="Pikuleva I.A."/>
            <person name="Tesh K."/>
            <person name="Waterman M.R."/>
            <person name="Kim Y."/>
        </authorList>
    </citation>
    <scope>X-RAY CRYSTALLOGRAPHY (2.5 ANGSTROMS)</scope>
</reference>
<keyword id="KW-0001">2Fe-2S</keyword>
<keyword id="KW-0002">3D-structure</keyword>
<keyword id="KW-0007">Acetylation</keyword>
<keyword id="KW-0025">Alternative splicing</keyword>
<keyword id="KW-0153">Cholesterol metabolism</keyword>
<keyword id="KW-0903">Direct protein sequencing</keyword>
<keyword id="KW-0249">Electron transport</keyword>
<keyword id="KW-0408">Iron</keyword>
<keyword id="KW-0411">Iron-sulfur</keyword>
<keyword id="KW-0443">Lipid metabolism</keyword>
<keyword id="KW-0479">Metal-binding</keyword>
<keyword id="KW-0496">Mitochondrion</keyword>
<keyword id="KW-0597">Phosphoprotein</keyword>
<keyword id="KW-1185">Reference proteome</keyword>
<keyword id="KW-0753">Steroid metabolism</keyword>
<keyword id="KW-0755">Steroidogenesis</keyword>
<keyword id="KW-1207">Sterol metabolism</keyword>
<keyword id="KW-0809">Transit peptide</keyword>
<keyword id="KW-0813">Transport</keyword>
<evidence type="ECO:0000250" key="1">
    <source>
        <dbReference type="UniProtKB" id="P10109"/>
    </source>
</evidence>
<evidence type="ECO:0000250" key="2">
    <source>
        <dbReference type="UniProtKB" id="P46656"/>
    </source>
</evidence>
<evidence type="ECO:0000255" key="3">
    <source>
        <dbReference type="PROSITE-ProRule" id="PRU00465"/>
    </source>
</evidence>
<evidence type="ECO:0000269" key="4">
    <source>
    </source>
</evidence>
<evidence type="ECO:0000269" key="5">
    <source>
    </source>
</evidence>
<evidence type="ECO:0000303" key="6">
    <source>
    </source>
</evidence>
<evidence type="ECO:0000305" key="7"/>
<evidence type="ECO:0007829" key="8">
    <source>
        <dbReference type="PDB" id="1E6E"/>
    </source>
</evidence>
<evidence type="ECO:0007829" key="9">
    <source>
        <dbReference type="PDB" id="1L6V"/>
    </source>
</evidence>
<evidence type="ECO:0007829" key="10">
    <source>
        <dbReference type="PDB" id="2BT6"/>
    </source>
</evidence>
<protein>
    <recommendedName>
        <fullName>Adrenodoxin, mitochondrial</fullName>
    </recommendedName>
    <alternativeName>
        <fullName>Adrenal ferredoxin</fullName>
    </alternativeName>
    <alternativeName>
        <fullName>Ferredoxin-1</fullName>
    </alternativeName>
    <alternativeName>
        <fullName>Hepato-ferredoxin</fullName>
    </alternativeName>
</protein>
<proteinExistence type="evidence at protein level"/>
<accession>P00257</accession>
<accession>A5D9I2</accession>
<accession>P08498</accession>
<accession>P12713</accession>
<accession>Q32KZ0</accession>
<gene>
    <name type="primary">FDX1</name>
    <name type="synonym">ADX</name>
</gene>
<feature type="transit peptide" description="Mitochondrion">
    <location>
        <begin position="1"/>
        <end position="58"/>
    </location>
</feature>
<feature type="chain" id="PRO_0000000986" description="Adrenodoxin, mitochondrial">
    <location>
        <begin position="59"/>
        <end position="186"/>
    </location>
</feature>
<feature type="domain" description="2Fe-2S ferredoxin-type" evidence="3">
    <location>
        <begin position="65"/>
        <end position="169"/>
    </location>
</feature>
<feature type="binding site">
    <location>
        <position position="104"/>
    </location>
    <ligand>
        <name>[2Fe-2S] cluster</name>
        <dbReference type="ChEBI" id="CHEBI:190135"/>
    </ligand>
</feature>
<feature type="binding site">
    <location>
        <position position="110"/>
    </location>
    <ligand>
        <name>[2Fe-2S] cluster</name>
        <dbReference type="ChEBI" id="CHEBI:190135"/>
    </ligand>
</feature>
<feature type="binding site">
    <location>
        <position position="113"/>
    </location>
    <ligand>
        <name>[2Fe-2S] cluster</name>
        <dbReference type="ChEBI" id="CHEBI:190135"/>
    </ligand>
</feature>
<feature type="binding site">
    <location>
        <position position="150"/>
    </location>
    <ligand>
        <name>[2Fe-2S] cluster</name>
        <dbReference type="ChEBI" id="CHEBI:190135"/>
    </ligand>
</feature>
<feature type="modified residue" description="Phosphoserine" evidence="2">
    <location>
        <position position="61"/>
    </location>
</feature>
<feature type="modified residue" description="N6-acetyllysine; alternate" evidence="2">
    <location>
        <position position="64"/>
    </location>
</feature>
<feature type="modified residue" description="N6-succinyllysine; alternate" evidence="2">
    <location>
        <position position="64"/>
    </location>
</feature>
<feature type="modified residue" description="N6-succinyllysine" evidence="2">
    <location>
        <position position="156"/>
    </location>
</feature>
<feature type="modified residue" description="Phosphoserine" evidence="1">
    <location>
        <position position="175"/>
    </location>
</feature>
<feature type="splice variant" id="VSP_016558" description="In isoform 2." evidence="6">
    <original>ARPRAGAGGLRGSRGPGLGGGAVATRTLSVSGRAQSS</original>
    <variation>LKSSQFIKVSCSGSWISAAQRAFICYSKSGNITCFLR</variation>
    <location>
        <begin position="24"/>
        <end position="60"/>
    </location>
</feature>
<feature type="sequence conflict" description="In Ref. 6; AAI09850." evidence="7" ref="6">
    <original>L</original>
    <variation>M</variation>
    <location>
        <position position="6"/>
    </location>
</feature>
<feature type="sequence conflict" description="In Ref. 1; AAA30357." evidence="7" ref="1">
    <original>A</original>
    <variation>V</variation>
    <location>
        <position position="24"/>
    </location>
</feature>
<feature type="sequence conflict" description="In Ref. 8; AA sequence." evidence="7" ref="8">
    <original>E</original>
    <variation>Q</variation>
    <location>
        <position position="62"/>
    </location>
</feature>
<feature type="sequence conflict" description="In Ref. 8; AA sequence." evidence="7" ref="8">
    <original>D</original>
    <variation>N</variation>
    <location>
        <position position="130"/>
    </location>
</feature>
<feature type="sequence conflict" description="In Ref. 8; AA sequence." evidence="7" ref="8">
    <original>D</original>
    <variation>N</variation>
    <location>
        <position position="134"/>
    </location>
</feature>
<feature type="strand" evidence="10">
    <location>
        <begin position="64"/>
        <end position="70"/>
    </location>
</feature>
<feature type="strand" evidence="9">
    <location>
        <begin position="72"/>
        <end position="74"/>
    </location>
</feature>
<feature type="strand" evidence="10">
    <location>
        <begin position="76"/>
        <end position="82"/>
    </location>
</feature>
<feature type="helix" evidence="10">
    <location>
        <begin position="87"/>
        <end position="93"/>
    </location>
</feature>
<feature type="turn" evidence="10">
    <location>
        <begin position="99"/>
        <end position="104"/>
    </location>
</feature>
<feature type="strand" evidence="10">
    <location>
        <begin position="105"/>
        <end position="111"/>
    </location>
</feature>
<feature type="strand" evidence="10">
    <location>
        <begin position="114"/>
        <end position="116"/>
    </location>
</feature>
<feature type="helix" evidence="10">
    <location>
        <begin position="119"/>
        <end position="122"/>
    </location>
</feature>
<feature type="helix" evidence="10">
    <location>
        <begin position="130"/>
        <end position="136"/>
    </location>
</feature>
<feature type="strand" evidence="9">
    <location>
        <begin position="143"/>
        <end position="145"/>
    </location>
</feature>
<feature type="strand" evidence="10">
    <location>
        <begin position="146"/>
        <end position="148"/>
    </location>
</feature>
<feature type="helix" evidence="10">
    <location>
        <begin position="149"/>
        <end position="151"/>
    </location>
</feature>
<feature type="helix" evidence="10">
    <location>
        <begin position="156"/>
        <end position="158"/>
    </location>
</feature>
<feature type="strand" evidence="10">
    <location>
        <begin position="161"/>
        <end position="164"/>
    </location>
</feature>
<feature type="helix" evidence="8">
    <location>
        <begin position="171"/>
        <end position="173"/>
    </location>
</feature>
<organism>
    <name type="scientific">Bos taurus</name>
    <name type="common">Bovine</name>
    <dbReference type="NCBI Taxonomy" id="9913"/>
    <lineage>
        <taxon>Eukaryota</taxon>
        <taxon>Metazoa</taxon>
        <taxon>Chordata</taxon>
        <taxon>Craniata</taxon>
        <taxon>Vertebrata</taxon>
        <taxon>Euteleostomi</taxon>
        <taxon>Mammalia</taxon>
        <taxon>Eutheria</taxon>
        <taxon>Laurasiatheria</taxon>
        <taxon>Artiodactyla</taxon>
        <taxon>Ruminantia</taxon>
        <taxon>Pecora</taxon>
        <taxon>Bovidae</taxon>
        <taxon>Bovinae</taxon>
        <taxon>Bos</taxon>
    </lineage>
</organism>
<comment type="function">
    <text evidence="5">Essential for the synthesis of various steroid hormones. Participates in the reduction of mitochondrial cytochrome P450 for steroidogenesis. Transfers electrons from adrenodoxin reductase to CYP11A1, a cytochrome P450 that catalyzes cholesterol side-chain cleavage to produce pregnenolone, the precursor of most steroid hormones. Does not form a ternary complex with adrenodoxin reductase and CYP11A1 but shuttles between the two enzymes to transfer electrons.</text>
</comment>
<comment type="cofactor">
    <cofactor>
        <name>[2Fe-2S] cluster</name>
        <dbReference type="ChEBI" id="CHEBI:190135"/>
    </cofactor>
    <text>Binds 1 [2Fe-2S] cluster.</text>
</comment>
<comment type="subunit">
    <text evidence="1">Interacts with CYP11A1.</text>
</comment>
<comment type="interaction">
    <interactant intactId="EBI-593992">
        <id>P00257</id>
    </interactant>
    <interactant intactId="EBI-593948">
        <id>P08165</id>
        <label>FDXR</label>
    </interactant>
    <organismsDiffer>false</organismsDiffer>
    <experiments>2</experiments>
</comment>
<comment type="subcellular location">
    <subcellularLocation>
        <location>Mitochondrion matrix</location>
    </subcellularLocation>
</comment>
<comment type="alternative products">
    <event type="alternative splicing"/>
    <isoform>
        <id>P00257-1</id>
        <name>1</name>
        <sequence type="displayed"/>
    </isoform>
    <isoform>
        <id>P00257-2</id>
        <name>2</name>
        <sequence type="described" ref="VSP_016558"/>
    </isoform>
</comment>
<comment type="tissue specificity">
    <text evidence="4">Detected in adrenal cortex and corpus luteum (at protein level).</text>
</comment>
<comment type="similarity">
    <text evidence="7">Belongs to the adrenodoxin/putidaredoxin family.</text>
</comment>
<sequence length="186" mass="19756">MAARLLRVASAALGDTAGRWRLLARPRAGAGGLRGSRGPGLGGGAVATRTLSVSGRAQSSSEDKITVHFINRDGETLTTKGKIGDSLLDVVVQNNLDIDGFGACEGTLACSTCHLIFEQHIFEKLEAITDEENDMLDLAYGLTDRSRLGCQICLTKAMDNMTVRVPDAVSDARESIDMGMNSSKIE</sequence>
<dbReference type="EMBL" id="M11746">
    <property type="protein sequence ID" value="AAA30357.1"/>
    <property type="molecule type" value="mRNA"/>
</dbReference>
<dbReference type="EMBL" id="M16934">
    <property type="protein sequence ID" value="AAA30358.1"/>
    <property type="molecule type" value="mRNA"/>
</dbReference>
<dbReference type="EMBL" id="D00467">
    <property type="protein sequence ID" value="BAA00362.1"/>
    <property type="molecule type" value="mRNA"/>
</dbReference>
<dbReference type="EMBL" id="D00471">
    <property type="protein sequence ID" value="BAA00363.1"/>
    <property type="molecule type" value="Genomic_DNA"/>
</dbReference>
<dbReference type="EMBL" id="M19656">
    <property type="protein sequence ID" value="AAA78950.1"/>
    <property type="molecule type" value="Genomic_DNA"/>
</dbReference>
<dbReference type="EMBL" id="M19474">
    <property type="protein sequence ID" value="AAA78950.1"/>
    <property type="status" value="JOINED"/>
    <property type="molecule type" value="Genomic_DNA"/>
</dbReference>
<dbReference type="EMBL" id="BT030601">
    <property type="protein sequence ID" value="ABQ13041.1"/>
    <property type="molecule type" value="mRNA"/>
</dbReference>
<dbReference type="EMBL" id="BC109849">
    <property type="protein sequence ID" value="AAI09850.1"/>
    <property type="molecule type" value="mRNA"/>
</dbReference>
<dbReference type="EMBL" id="S78831">
    <property type="protein sequence ID" value="AAB21264.1"/>
    <property type="molecule type" value="mRNA"/>
</dbReference>
<dbReference type="PIR" id="JX0094">
    <property type="entry name" value="AXBO"/>
</dbReference>
<dbReference type="RefSeq" id="NP_851354.1">
    <molecule id="P00257-2"/>
    <property type="nucleotide sequence ID" value="NM_181011.2"/>
</dbReference>
<dbReference type="PDB" id="1AYF">
    <property type="method" value="X-ray"/>
    <property type="resolution" value="1.85 A"/>
    <property type="chains" value="A/B=62-166"/>
</dbReference>
<dbReference type="PDB" id="1CJE">
    <property type="method" value="X-ray"/>
    <property type="resolution" value="2.50 A"/>
    <property type="chains" value="A/B/C/D=60-186"/>
</dbReference>
<dbReference type="PDB" id="1E6E">
    <property type="method" value="X-ray"/>
    <property type="resolution" value="2.30 A"/>
    <property type="chains" value="B/D=59-186"/>
</dbReference>
<dbReference type="PDB" id="1L6U">
    <property type="method" value="NMR"/>
    <property type="chains" value="A=59-186"/>
</dbReference>
<dbReference type="PDB" id="1L6V">
    <property type="method" value="NMR"/>
    <property type="chains" value="A=59-186"/>
</dbReference>
<dbReference type="PDB" id="2BT6">
    <property type="method" value="X-ray"/>
    <property type="resolution" value="1.50 A"/>
    <property type="chains" value="A/B=63-166"/>
</dbReference>
<dbReference type="PDB" id="2JQR">
    <property type="method" value="NMR"/>
    <property type="chains" value="B=62-166"/>
</dbReference>
<dbReference type="PDBsum" id="1AYF"/>
<dbReference type="PDBsum" id="1CJE"/>
<dbReference type="PDBsum" id="1E6E"/>
<dbReference type="PDBsum" id="1L6U"/>
<dbReference type="PDBsum" id="1L6V"/>
<dbReference type="PDBsum" id="2BT6"/>
<dbReference type="PDBsum" id="2JQR"/>
<dbReference type="BMRB" id="P00257"/>
<dbReference type="SMR" id="P00257"/>
<dbReference type="CORUM" id="P00257"/>
<dbReference type="FunCoup" id="P00257">
    <property type="interactions" value="589"/>
</dbReference>
<dbReference type="IntAct" id="P00257">
    <property type="interactions" value="2"/>
</dbReference>
<dbReference type="STRING" id="9913.ENSBTAP00000015660"/>
<dbReference type="iPTMnet" id="P00257"/>
<dbReference type="PaxDb" id="9913-ENSBTAP00000015660"/>
<dbReference type="Ensembl" id="ENSBTAT00000015660.7">
    <molecule id="P00257-1"/>
    <property type="protein sequence ID" value="ENSBTAP00000015660.5"/>
    <property type="gene ID" value="ENSBTAG00000011793.7"/>
</dbReference>
<dbReference type="GeneID" id="281157"/>
<dbReference type="KEGG" id="bta:281157"/>
<dbReference type="CTD" id="2230"/>
<dbReference type="VEuPathDB" id="HostDB:ENSBTAG00000011793"/>
<dbReference type="eggNOG" id="KOG3309">
    <property type="taxonomic scope" value="Eukaryota"/>
</dbReference>
<dbReference type="GeneTree" id="ENSGT00940000156916"/>
<dbReference type="HOGENOM" id="CLU_082632_2_1_1"/>
<dbReference type="InParanoid" id="P00257"/>
<dbReference type="OMA" id="TPMEEDM"/>
<dbReference type="OrthoDB" id="268593at2759"/>
<dbReference type="TreeFam" id="TF319845"/>
<dbReference type="Reactome" id="R-BTA-1362409">
    <property type="pathway name" value="Mitochondrial iron-sulfur cluster biogenesis"/>
</dbReference>
<dbReference type="Reactome" id="R-BTA-196108">
    <property type="pathway name" value="Pregnenolone biosynthesis"/>
</dbReference>
<dbReference type="Reactome" id="R-BTA-211976">
    <property type="pathway name" value="Endogenous sterols"/>
</dbReference>
<dbReference type="Reactome" id="R-BTA-2395516">
    <property type="pathway name" value="Electron transport from NADPH to Ferredoxin"/>
</dbReference>
<dbReference type="Reactome" id="R-BTA-9857492">
    <property type="pathway name" value="Protein lipoylation"/>
</dbReference>
<dbReference type="EvolutionaryTrace" id="P00257"/>
<dbReference type="Proteomes" id="UP000009136">
    <property type="component" value="Chromosome 15"/>
</dbReference>
<dbReference type="Bgee" id="ENSBTAG00000011793">
    <property type="expression patterns" value="Expressed in diaphragm and 104 other cell types or tissues"/>
</dbReference>
<dbReference type="GO" id="GO:0005759">
    <property type="term" value="C:mitochondrial matrix"/>
    <property type="evidence" value="ECO:0000250"/>
    <property type="project" value="UniProtKB"/>
</dbReference>
<dbReference type="GO" id="GO:0005739">
    <property type="term" value="C:mitochondrion"/>
    <property type="evidence" value="ECO:0000318"/>
    <property type="project" value="GO_Central"/>
</dbReference>
<dbReference type="GO" id="GO:0051537">
    <property type="term" value="F:2 iron, 2 sulfur cluster binding"/>
    <property type="evidence" value="ECO:0000250"/>
    <property type="project" value="UniProtKB"/>
</dbReference>
<dbReference type="GO" id="GO:0009055">
    <property type="term" value="F:electron transfer activity"/>
    <property type="evidence" value="ECO:0000314"/>
    <property type="project" value="UniProtKB"/>
</dbReference>
<dbReference type="GO" id="GO:0046872">
    <property type="term" value="F:metal ion binding"/>
    <property type="evidence" value="ECO:0007669"/>
    <property type="project" value="UniProtKB-KW"/>
</dbReference>
<dbReference type="GO" id="GO:0042803">
    <property type="term" value="F:protein homodimerization activity"/>
    <property type="evidence" value="ECO:0000314"/>
    <property type="project" value="AgBase"/>
</dbReference>
<dbReference type="GO" id="GO:0071320">
    <property type="term" value="P:cellular response to cAMP"/>
    <property type="evidence" value="ECO:0007669"/>
    <property type="project" value="Ensembl"/>
</dbReference>
<dbReference type="GO" id="GO:1904322">
    <property type="term" value="P:cellular response to forskolin"/>
    <property type="evidence" value="ECO:0007669"/>
    <property type="project" value="Ensembl"/>
</dbReference>
<dbReference type="GO" id="GO:0008203">
    <property type="term" value="P:cholesterol metabolic process"/>
    <property type="evidence" value="ECO:0000250"/>
    <property type="project" value="UniProtKB"/>
</dbReference>
<dbReference type="GO" id="GO:0022900">
    <property type="term" value="P:electron transport chain"/>
    <property type="evidence" value="ECO:0000314"/>
    <property type="project" value="UniProtKB"/>
</dbReference>
<dbReference type="GO" id="GO:0042446">
    <property type="term" value="P:hormone biosynthetic process"/>
    <property type="evidence" value="ECO:0000250"/>
    <property type="project" value="UniProtKB"/>
</dbReference>
<dbReference type="GO" id="GO:0140647">
    <property type="term" value="P:P450-containing electron transport chain"/>
    <property type="evidence" value="ECO:0007669"/>
    <property type="project" value="InterPro"/>
</dbReference>
<dbReference type="GO" id="GO:0022904">
    <property type="term" value="P:respiratory electron transport chain"/>
    <property type="evidence" value="ECO:0000314"/>
    <property type="project" value="GO_Central"/>
</dbReference>
<dbReference type="GO" id="GO:0006694">
    <property type="term" value="P:steroid biosynthetic process"/>
    <property type="evidence" value="ECO:0000304"/>
    <property type="project" value="AgBase"/>
</dbReference>
<dbReference type="CDD" id="cd00207">
    <property type="entry name" value="fer2"/>
    <property type="match status" value="1"/>
</dbReference>
<dbReference type="FunFam" id="3.10.20.30:FF:000013">
    <property type="entry name" value="Adrenodoxin, mitochondrial"/>
    <property type="match status" value="1"/>
</dbReference>
<dbReference type="Gene3D" id="3.10.20.30">
    <property type="match status" value="1"/>
</dbReference>
<dbReference type="InterPro" id="IPR036010">
    <property type="entry name" value="2Fe-2S_ferredoxin-like_sf"/>
</dbReference>
<dbReference type="InterPro" id="IPR001041">
    <property type="entry name" value="2Fe-2S_ferredoxin-type"/>
</dbReference>
<dbReference type="InterPro" id="IPR001055">
    <property type="entry name" value="Adrenodoxin-like"/>
</dbReference>
<dbReference type="InterPro" id="IPR018298">
    <property type="entry name" value="Adrenodoxin_Fe-S_BS"/>
</dbReference>
<dbReference type="InterPro" id="IPR012675">
    <property type="entry name" value="Beta-grasp_dom_sf"/>
</dbReference>
<dbReference type="PANTHER" id="PTHR23426:SF26">
    <property type="entry name" value="ADRENODOXIN, MITOCHONDRIAL"/>
    <property type="match status" value="1"/>
</dbReference>
<dbReference type="PANTHER" id="PTHR23426">
    <property type="entry name" value="FERREDOXIN/ADRENODOXIN"/>
    <property type="match status" value="1"/>
</dbReference>
<dbReference type="Pfam" id="PF00111">
    <property type="entry name" value="Fer2"/>
    <property type="match status" value="1"/>
</dbReference>
<dbReference type="PRINTS" id="PR00355">
    <property type="entry name" value="ADRENODOXIN"/>
</dbReference>
<dbReference type="SUPFAM" id="SSF54292">
    <property type="entry name" value="2Fe-2S ferredoxin-like"/>
    <property type="match status" value="1"/>
</dbReference>
<dbReference type="PROSITE" id="PS51085">
    <property type="entry name" value="2FE2S_FER_2"/>
    <property type="match status" value="1"/>
</dbReference>
<dbReference type="PROSITE" id="PS00814">
    <property type="entry name" value="ADX"/>
    <property type="match status" value="1"/>
</dbReference>
<name>ADX_BOVIN</name>